<gene>
    <name evidence="1" type="primary">proQ</name>
    <name type="ordered locus">SEN1191</name>
</gene>
<evidence type="ECO:0000255" key="1">
    <source>
        <dbReference type="HAMAP-Rule" id="MF_00749"/>
    </source>
</evidence>
<evidence type="ECO:0000256" key="2">
    <source>
        <dbReference type="SAM" id="MobiDB-lite"/>
    </source>
</evidence>
<organism>
    <name type="scientific">Salmonella enteritidis PT4 (strain P125109)</name>
    <dbReference type="NCBI Taxonomy" id="550537"/>
    <lineage>
        <taxon>Bacteria</taxon>
        <taxon>Pseudomonadati</taxon>
        <taxon>Pseudomonadota</taxon>
        <taxon>Gammaproteobacteria</taxon>
        <taxon>Enterobacterales</taxon>
        <taxon>Enterobacteriaceae</taxon>
        <taxon>Salmonella</taxon>
    </lineage>
</organism>
<comment type="function">
    <text evidence="1">RNA chaperone with significant RNA binding, RNA strand exchange and RNA duplexing activities. May regulate ProP activity through an RNA-based, post-transcriptional mechanism.</text>
</comment>
<comment type="subcellular location">
    <subcellularLocation>
        <location evidence="1">Cytoplasm</location>
    </subcellularLocation>
</comment>
<comment type="similarity">
    <text evidence="1">Belongs to the ProQ family.</text>
</comment>
<name>PROQ_SALEP</name>
<reference key="1">
    <citation type="journal article" date="2008" name="Genome Res.">
        <title>Comparative genome analysis of Salmonella enteritidis PT4 and Salmonella gallinarum 287/91 provides insights into evolutionary and host adaptation pathways.</title>
        <authorList>
            <person name="Thomson N.R."/>
            <person name="Clayton D.J."/>
            <person name="Windhorst D."/>
            <person name="Vernikos G."/>
            <person name="Davidson S."/>
            <person name="Churcher C."/>
            <person name="Quail M.A."/>
            <person name="Stevens M."/>
            <person name="Jones M.A."/>
            <person name="Watson M."/>
            <person name="Barron A."/>
            <person name="Layton A."/>
            <person name="Pickard D."/>
            <person name="Kingsley R.A."/>
            <person name="Bignell A."/>
            <person name="Clark L."/>
            <person name="Harris B."/>
            <person name="Ormond D."/>
            <person name="Abdellah Z."/>
            <person name="Brooks K."/>
            <person name="Cherevach I."/>
            <person name="Chillingworth T."/>
            <person name="Woodward J."/>
            <person name="Norberczak H."/>
            <person name="Lord A."/>
            <person name="Arrowsmith C."/>
            <person name="Jagels K."/>
            <person name="Moule S."/>
            <person name="Mungall K."/>
            <person name="Saunders M."/>
            <person name="Whitehead S."/>
            <person name="Chabalgoity J.A."/>
            <person name="Maskell D."/>
            <person name="Humphreys T."/>
            <person name="Roberts M."/>
            <person name="Barrow P.A."/>
            <person name="Dougan G."/>
            <person name="Parkhill J."/>
        </authorList>
    </citation>
    <scope>NUCLEOTIDE SEQUENCE [LARGE SCALE GENOMIC DNA]</scope>
    <source>
        <strain>P125109</strain>
    </source>
</reference>
<proteinExistence type="inferred from homology"/>
<dbReference type="EMBL" id="AM933172">
    <property type="protein sequence ID" value="CAR32772.1"/>
    <property type="molecule type" value="Genomic_DNA"/>
</dbReference>
<dbReference type="RefSeq" id="WP_000431401.1">
    <property type="nucleotide sequence ID" value="NC_011294.1"/>
</dbReference>
<dbReference type="SMR" id="B5R2S5"/>
<dbReference type="KEGG" id="set:SEN1191"/>
<dbReference type="HOGENOM" id="CLU_113254_0_0_6"/>
<dbReference type="Proteomes" id="UP000000613">
    <property type="component" value="Chromosome"/>
</dbReference>
<dbReference type="GO" id="GO:0005829">
    <property type="term" value="C:cytosol"/>
    <property type="evidence" value="ECO:0007669"/>
    <property type="project" value="TreeGrafter"/>
</dbReference>
<dbReference type="GO" id="GO:0033592">
    <property type="term" value="F:RNA strand annealing activity"/>
    <property type="evidence" value="ECO:0007669"/>
    <property type="project" value="UniProtKB-UniRule"/>
</dbReference>
<dbReference type="GO" id="GO:0034057">
    <property type="term" value="F:RNA strand-exchange activity"/>
    <property type="evidence" value="ECO:0007669"/>
    <property type="project" value="UniProtKB-UniRule"/>
</dbReference>
<dbReference type="GO" id="GO:0010608">
    <property type="term" value="P:post-transcriptional regulation of gene expression"/>
    <property type="evidence" value="ECO:0007669"/>
    <property type="project" value="InterPro"/>
</dbReference>
<dbReference type="FunFam" id="1.10.1710.10:FF:000001">
    <property type="entry name" value="RNA chaperone ProQ"/>
    <property type="match status" value="1"/>
</dbReference>
<dbReference type="Gene3D" id="1.10.1710.10">
    <property type="entry name" value="ProQ/FinO domain"/>
    <property type="match status" value="1"/>
</dbReference>
<dbReference type="HAMAP" id="MF_00749">
    <property type="entry name" value="ProQ"/>
    <property type="match status" value="1"/>
</dbReference>
<dbReference type="InterPro" id="IPR023529">
    <property type="entry name" value="ProQ"/>
</dbReference>
<dbReference type="InterPro" id="IPR016103">
    <property type="entry name" value="ProQ/FinO"/>
</dbReference>
<dbReference type="InterPro" id="IPR036442">
    <property type="entry name" value="ProQ/FinO_sf"/>
</dbReference>
<dbReference type="InterPro" id="IPR035236">
    <property type="entry name" value="ProQ_C"/>
</dbReference>
<dbReference type="NCBIfam" id="NF003434">
    <property type="entry name" value="PRK04950.1"/>
    <property type="match status" value="1"/>
</dbReference>
<dbReference type="PANTHER" id="PTHR38106">
    <property type="entry name" value="RNA CHAPERONE PROQ"/>
    <property type="match status" value="1"/>
</dbReference>
<dbReference type="PANTHER" id="PTHR38106:SF1">
    <property type="entry name" value="RNA CHAPERONE PROQ"/>
    <property type="match status" value="1"/>
</dbReference>
<dbReference type="Pfam" id="PF04352">
    <property type="entry name" value="ProQ"/>
    <property type="match status" value="1"/>
</dbReference>
<dbReference type="Pfam" id="PF17516">
    <property type="entry name" value="ProQ_C"/>
    <property type="match status" value="1"/>
</dbReference>
<dbReference type="SMART" id="SM00945">
    <property type="entry name" value="ProQ"/>
    <property type="match status" value="1"/>
</dbReference>
<dbReference type="SUPFAM" id="SSF48657">
    <property type="entry name" value="FinO-like"/>
    <property type="match status" value="1"/>
</dbReference>
<keyword id="KW-0143">Chaperone</keyword>
<keyword id="KW-0963">Cytoplasm</keyword>
<keyword id="KW-0694">RNA-binding</keyword>
<protein>
    <recommendedName>
        <fullName evidence="1">RNA chaperone ProQ</fullName>
    </recommendedName>
</protein>
<sequence length="228" mass="25438">MENQPKLNSSKEVIAFLAERFPHCFSAEGEARPLKIGIFQDLVERVGGEMNLSKTQLRSALRLYTSSWRYLYGVKPGATRVDLDGNPCGELEEQHVEHARKQLEEAKARVQAQRAEQQAKKREAAAAAGEKEDAPRRERKPRPVARRKEGAERKPRADKPTTKAPRAPREEKHTPVSDISVLTVGQSLKVKAGNNAMDATVLEITKDGVRVQLNSGMSLIVRAEHLVF</sequence>
<feature type="chain" id="PRO_1000133303" description="RNA chaperone ProQ">
    <location>
        <begin position="1"/>
        <end position="228"/>
    </location>
</feature>
<feature type="region of interest" description="Disordered" evidence="2">
    <location>
        <begin position="107"/>
        <end position="178"/>
    </location>
</feature>
<feature type="compositionally biased region" description="Basic and acidic residues" evidence="2">
    <location>
        <begin position="117"/>
        <end position="136"/>
    </location>
</feature>
<feature type="compositionally biased region" description="Basic and acidic residues" evidence="2">
    <location>
        <begin position="146"/>
        <end position="175"/>
    </location>
</feature>
<accession>B5R2S5</accession>